<proteinExistence type="inferred from homology"/>
<protein>
    <recommendedName>
        <fullName>Probable mannosyltransferase MNT3</fullName>
        <ecNumber>2.4.1.-</ecNumber>
    </recommendedName>
</protein>
<keyword id="KW-0325">Glycoprotein</keyword>
<keyword id="KW-0328">Glycosyltransferase</keyword>
<keyword id="KW-0472">Membrane</keyword>
<keyword id="KW-1185">Reference proteome</keyword>
<keyword id="KW-0735">Signal-anchor</keyword>
<keyword id="KW-0808">Transferase</keyword>
<keyword id="KW-0812">Transmembrane</keyword>
<keyword id="KW-1133">Transmembrane helix</keyword>
<accession>P87207</accession>
<accession>A0A1D8PSZ3</accession>
<accession>Q59KJ8</accession>
<evidence type="ECO:0000255" key="1"/>
<evidence type="ECO:0000305" key="2"/>
<feature type="chain" id="PRO_0000208249" description="Probable mannosyltransferase MNT3">
    <location>
        <begin position="1"/>
        <end position="378"/>
    </location>
</feature>
<feature type="topological domain" description="Cytoplasmic" evidence="1">
    <location>
        <begin position="1"/>
        <end position="4"/>
    </location>
</feature>
<feature type="transmembrane region" description="Helical; Signal-anchor for type II membrane protein" evidence="1">
    <location>
        <begin position="5"/>
        <end position="25"/>
    </location>
</feature>
<feature type="topological domain" description="Lumenal" evidence="1">
    <location>
        <begin position="26"/>
        <end position="378"/>
    </location>
</feature>
<feature type="glycosylation site" description="N-linked (GlcNAc...) asparagine" evidence="1">
    <location>
        <position position="73"/>
    </location>
</feature>
<feature type="glycosylation site" description="N-linked (GlcNAc...) asparagine" evidence="1">
    <location>
        <position position="149"/>
    </location>
</feature>
<feature type="sequence conflict" description="In Ref. 1; CAA73985." evidence="2" ref="1">
    <original>W</original>
    <variation>R</variation>
    <location>
        <position position="3"/>
    </location>
</feature>
<feature type="sequence conflict" description="In Ref. 1; CAA73985." evidence="2" ref="1">
    <original>S</original>
    <variation>P</variation>
    <location>
        <position position="18"/>
    </location>
</feature>
<feature type="sequence conflict" description="In Ref. 1; CAA73985." evidence="2" ref="1">
    <original>T</original>
    <variation>I</variation>
    <location>
        <position position="29"/>
    </location>
</feature>
<feature type="sequence conflict" description="In Ref. 1; CAA73985." evidence="2" ref="1">
    <original>T</original>
    <variation>I</variation>
    <location>
        <position position="55"/>
    </location>
</feature>
<feature type="sequence conflict" description="In Ref. 1; CAA73985." evidence="2" ref="1">
    <original>I</original>
    <variation>T</variation>
    <location>
        <position position="67"/>
    </location>
</feature>
<feature type="sequence conflict" description="In Ref. 1; CAA73985." evidence="2" ref="1">
    <original>RNSDV</original>
    <variation>QNSDI</variation>
    <location>
        <begin position="81"/>
        <end position="85"/>
    </location>
</feature>
<name>MNT3_CANAL</name>
<gene>
    <name type="primary">MNT3</name>
    <name type="ordered locus">CAALFM_CR05290WA</name>
    <name type="ORF">CaO19.8624</name>
</gene>
<organism>
    <name type="scientific">Candida albicans (strain SC5314 / ATCC MYA-2876)</name>
    <name type="common">Yeast</name>
    <dbReference type="NCBI Taxonomy" id="237561"/>
    <lineage>
        <taxon>Eukaryota</taxon>
        <taxon>Fungi</taxon>
        <taxon>Dikarya</taxon>
        <taxon>Ascomycota</taxon>
        <taxon>Saccharomycotina</taxon>
        <taxon>Pichiomycetes</taxon>
        <taxon>Debaryomycetaceae</taxon>
        <taxon>Candida/Lodderomyces clade</taxon>
        <taxon>Candida</taxon>
    </lineage>
</organism>
<dbReference type="EC" id="2.4.1.-"/>
<dbReference type="EMBL" id="Y13642">
    <property type="protein sequence ID" value="CAA73985.1"/>
    <property type="molecule type" value="Genomic_DNA"/>
</dbReference>
<dbReference type="EMBL" id="CP017630">
    <property type="protein sequence ID" value="AOW31254.1"/>
    <property type="molecule type" value="Genomic_DNA"/>
</dbReference>
<dbReference type="RefSeq" id="XP_710275.2">
    <property type="nucleotide sequence ID" value="XM_705183.2"/>
</dbReference>
<dbReference type="SMR" id="P87207"/>
<dbReference type="STRING" id="237561.P87207"/>
<dbReference type="CAZy" id="GT15">
    <property type="family name" value="Glycosyltransferase Family 15"/>
</dbReference>
<dbReference type="GlyCosmos" id="P87207">
    <property type="glycosylation" value="2 sites, No reported glycans"/>
</dbReference>
<dbReference type="EnsemblFungi" id="CR_05290W_A-T">
    <property type="protein sequence ID" value="CR_05290W_A-T-p1"/>
    <property type="gene ID" value="CR_05290W_A"/>
</dbReference>
<dbReference type="GeneID" id="3648123"/>
<dbReference type="KEGG" id="cal:CAALFM_CR05290WA"/>
<dbReference type="CGD" id="CAL0000188769">
    <property type="gene designation" value="MNT3"/>
</dbReference>
<dbReference type="VEuPathDB" id="FungiDB:CR_05290W_A"/>
<dbReference type="eggNOG" id="KOG4472">
    <property type="taxonomic scope" value="Eukaryota"/>
</dbReference>
<dbReference type="HOGENOM" id="CLU_024327_4_2_1"/>
<dbReference type="InParanoid" id="P87207"/>
<dbReference type="OrthoDB" id="439943at2759"/>
<dbReference type="Proteomes" id="UP000000559">
    <property type="component" value="Chromosome R"/>
</dbReference>
<dbReference type="GO" id="GO:0005794">
    <property type="term" value="C:Golgi apparatus"/>
    <property type="evidence" value="ECO:0000318"/>
    <property type="project" value="GO_Central"/>
</dbReference>
<dbReference type="GO" id="GO:0016020">
    <property type="term" value="C:membrane"/>
    <property type="evidence" value="ECO:0007669"/>
    <property type="project" value="UniProtKB-SubCell"/>
</dbReference>
<dbReference type="GO" id="GO:0000026">
    <property type="term" value="F:alpha-1,2-mannosyltransferase activity"/>
    <property type="evidence" value="ECO:0000318"/>
    <property type="project" value="GO_Central"/>
</dbReference>
<dbReference type="GO" id="GO:0000031">
    <property type="term" value="F:mannosylphosphate transferase activity"/>
    <property type="evidence" value="ECO:0000316"/>
    <property type="project" value="CGD"/>
</dbReference>
<dbReference type="GO" id="GO:0000032">
    <property type="term" value="P:cell wall mannoprotein biosynthetic process"/>
    <property type="evidence" value="ECO:0000318"/>
    <property type="project" value="GO_Central"/>
</dbReference>
<dbReference type="GO" id="GO:0006487">
    <property type="term" value="P:protein N-linked glycosylation"/>
    <property type="evidence" value="ECO:0000318"/>
    <property type="project" value="GO_Central"/>
</dbReference>
<dbReference type="GO" id="GO:0006493">
    <property type="term" value="P:protein O-linked glycosylation"/>
    <property type="evidence" value="ECO:0000318"/>
    <property type="project" value="GO_Central"/>
</dbReference>
<dbReference type="FunFam" id="3.90.550.10:FF:000051">
    <property type="entry name" value="Alpha-1,2-mannosyltransferase (Ktr4)"/>
    <property type="match status" value="1"/>
</dbReference>
<dbReference type="Gene3D" id="3.90.550.10">
    <property type="entry name" value="Spore Coat Polysaccharide Biosynthesis Protein SpsA, Chain A"/>
    <property type="match status" value="1"/>
</dbReference>
<dbReference type="InterPro" id="IPR002685">
    <property type="entry name" value="Glyco_trans_15"/>
</dbReference>
<dbReference type="InterPro" id="IPR029044">
    <property type="entry name" value="Nucleotide-diphossugar_trans"/>
</dbReference>
<dbReference type="PANTHER" id="PTHR31121">
    <property type="entry name" value="ALPHA-1,2 MANNOSYLTRANSFERASE KTR1"/>
    <property type="match status" value="1"/>
</dbReference>
<dbReference type="PANTHER" id="PTHR31121:SF6">
    <property type="entry name" value="ALPHA-1,2 MANNOSYLTRANSFERASE KTR1"/>
    <property type="match status" value="1"/>
</dbReference>
<dbReference type="Pfam" id="PF01793">
    <property type="entry name" value="Glyco_transf_15"/>
    <property type="match status" value="1"/>
</dbReference>
<dbReference type="PIRSF" id="PIRSF018153">
    <property type="entry name" value="Glyco_trans_15"/>
    <property type="match status" value="1"/>
</dbReference>
<dbReference type="SUPFAM" id="SSF53448">
    <property type="entry name" value="Nucleotide-diphospho-sugar transferases"/>
    <property type="match status" value="1"/>
</dbReference>
<comment type="function">
    <text>Transfers an alpha-D-mannosyl residue from GDP-mannose into lipid-linked oligosaccharide, forming an alpha-(1-&gt;2)-D-mannosyl-D-mannose linkage.</text>
</comment>
<comment type="subcellular location">
    <subcellularLocation>
        <location evidence="2">Membrane</location>
        <topology evidence="2">Single-pass type II membrane protein</topology>
    </subcellularLocation>
</comment>
<comment type="similarity">
    <text evidence="2">Belongs to the glycosyltransferase 15 family.</text>
</comment>
<sequence length="378" mass="45322">MLWHLVFILIAILLLTFSPKIESLFKSFTINKPTKTTCYQYTTREQLKSILESDTHETNFCIEKPSISPPKTNSTLLMLCRNSDVFSVLETIQNIQDRFNDKYNYDYTFLNDVPFNYEFIYLVSSIIPHGKINFGLIPIEHWSYPSHINISLATEIRQNYANVPYGDSESYRHMCRFYSGFFYKHELVKQYQYYWRIEPGIKIYCDIDYDVFEYMIINDKKYGFVISLFEYSETIPTLWNHVVQYINDNEIKSELLPLLTNKYNWYNLCHFWSNFEIANLDIFNNDDYENFFQYLDNLGGFYYERWGDAPIHSIAIALFLQKKDIHWFENIGYYHVPYLQCPQDIDLYVKNKCTCNPDEDFTWSDLSCTNHFLNILHN</sequence>
<reference key="1">
    <citation type="submission" date="1997-06" db="EMBL/GenBank/DDBJ databases">
        <authorList>
            <person name="Buurman E.T."/>
            <person name="Gow N.A.R."/>
        </authorList>
    </citation>
    <scope>NUCLEOTIDE SEQUENCE [GENOMIC DNA]</scope>
    <source>
        <strain>SGY243</strain>
    </source>
</reference>
<reference key="2">
    <citation type="journal article" date="2004" name="Proc. Natl. Acad. Sci. U.S.A.">
        <title>The diploid genome sequence of Candida albicans.</title>
        <authorList>
            <person name="Jones T."/>
            <person name="Federspiel N.A."/>
            <person name="Chibana H."/>
            <person name="Dungan J."/>
            <person name="Kalman S."/>
            <person name="Magee B.B."/>
            <person name="Newport G."/>
            <person name="Thorstenson Y.R."/>
            <person name="Agabian N."/>
            <person name="Magee P.T."/>
            <person name="Davis R.W."/>
            <person name="Scherer S."/>
        </authorList>
    </citation>
    <scope>NUCLEOTIDE SEQUENCE [LARGE SCALE GENOMIC DNA]</scope>
    <source>
        <strain>SC5314 / ATCC MYA-2876</strain>
    </source>
</reference>
<reference key="3">
    <citation type="journal article" date="2007" name="Genome Biol.">
        <title>Assembly of the Candida albicans genome into sixteen supercontigs aligned on the eight chromosomes.</title>
        <authorList>
            <person name="van het Hoog M."/>
            <person name="Rast T.J."/>
            <person name="Martchenko M."/>
            <person name="Grindle S."/>
            <person name="Dignard D."/>
            <person name="Hogues H."/>
            <person name="Cuomo C."/>
            <person name="Berriman M."/>
            <person name="Scherer S."/>
            <person name="Magee B.B."/>
            <person name="Whiteway M."/>
            <person name="Chibana H."/>
            <person name="Nantel A."/>
            <person name="Magee P.T."/>
        </authorList>
    </citation>
    <scope>GENOME REANNOTATION</scope>
    <source>
        <strain>SC5314 / ATCC MYA-2876</strain>
    </source>
</reference>
<reference key="4">
    <citation type="journal article" date="2013" name="Genome Biol.">
        <title>Assembly of a phased diploid Candida albicans genome facilitates allele-specific measurements and provides a simple model for repeat and indel structure.</title>
        <authorList>
            <person name="Muzzey D."/>
            <person name="Schwartz K."/>
            <person name="Weissman J.S."/>
            <person name="Sherlock G."/>
        </authorList>
    </citation>
    <scope>NUCLEOTIDE SEQUENCE [LARGE SCALE GENOMIC DNA]</scope>
    <scope>GENOME REANNOTATION</scope>
    <source>
        <strain>SC5314 / ATCC MYA-2876</strain>
    </source>
</reference>